<evidence type="ECO:0000250" key="1"/>
<evidence type="ECO:0000305" key="2"/>
<protein>
    <recommendedName>
        <fullName evidence="2">Small ribosomal subunit protein uS3m</fullName>
    </recommendedName>
    <alternativeName>
        <fullName>Ribosomal protein VAR1, mitochondrial</fullName>
    </alternativeName>
</protein>
<dbReference type="EMBL" id="AE016821">
    <property type="protein sequence ID" value="AAS50171.1"/>
    <property type="molecule type" value="Genomic_DNA"/>
</dbReference>
<dbReference type="RefSeq" id="NP_987081.1">
    <property type="nucleotide sequence ID" value="NC_005789.1"/>
</dbReference>
<dbReference type="SMR" id="Q75G41"/>
<dbReference type="FunCoup" id="Q75G41">
    <property type="interactions" value="88"/>
</dbReference>
<dbReference type="STRING" id="284811.Q75G41"/>
<dbReference type="EnsemblFungi" id="AAS50171">
    <property type="protein sequence ID" value="AAS50171"/>
    <property type="gene ID" value="AGOS_AMI004W"/>
</dbReference>
<dbReference type="GeneID" id="2760771"/>
<dbReference type="KEGG" id="ago:AGOS_AMI004W"/>
<dbReference type="eggNOG" id="ENOG502SVA8">
    <property type="taxonomic scope" value="Eukaryota"/>
</dbReference>
<dbReference type="HOGENOM" id="CLU_714008_0_0_1"/>
<dbReference type="InParanoid" id="Q75G41"/>
<dbReference type="OMA" id="YMNINND"/>
<dbReference type="OrthoDB" id="4070137at2759"/>
<dbReference type="Proteomes" id="UP000000591">
    <property type="component" value="Mitochondrion"/>
</dbReference>
<dbReference type="GO" id="GO:0005763">
    <property type="term" value="C:mitochondrial small ribosomal subunit"/>
    <property type="evidence" value="ECO:0007669"/>
    <property type="project" value="EnsemblFungi"/>
</dbReference>
<dbReference type="GO" id="GO:0003735">
    <property type="term" value="F:structural constituent of ribosome"/>
    <property type="evidence" value="ECO:0007669"/>
    <property type="project" value="EnsemblFungi"/>
</dbReference>
<dbReference type="GO" id="GO:0032543">
    <property type="term" value="P:mitochondrial translation"/>
    <property type="evidence" value="ECO:0007669"/>
    <property type="project" value="EnsemblFungi"/>
</dbReference>
<dbReference type="InterPro" id="IPR007980">
    <property type="entry name" value="Ribosomal_uS3m_fun"/>
</dbReference>
<dbReference type="Pfam" id="PF05316">
    <property type="entry name" value="VAR1"/>
    <property type="match status" value="1"/>
</dbReference>
<reference key="1">
    <citation type="journal article" date="2004" name="Science">
        <title>The Ashbya gossypii genome as a tool for mapping the ancient Saccharomyces cerevisiae genome.</title>
        <authorList>
            <person name="Dietrich F.S."/>
            <person name="Voegeli S."/>
            <person name="Brachat S."/>
            <person name="Lerch A."/>
            <person name="Gates K."/>
            <person name="Steiner S."/>
            <person name="Mohr C."/>
            <person name="Poehlmann R."/>
            <person name="Luedi P."/>
            <person name="Choi S."/>
            <person name="Wing R.A."/>
            <person name="Flavier A."/>
            <person name="Gaffney T.D."/>
            <person name="Philippsen P."/>
        </authorList>
    </citation>
    <scope>NUCLEOTIDE SEQUENCE [LARGE SCALE GENOMIC DNA]</scope>
    <source>
        <strain>ATCC 10895 / CBS 109.51 / FGSC 9923 / NRRL Y-1056</strain>
    </source>
</reference>
<reference key="2">
    <citation type="journal article" date="2013" name="G3 (Bethesda)">
        <title>Genomes of Ashbya fungi isolated from insects reveal four mating-type loci, numerous translocations, lack of transposons, and distinct gene duplications.</title>
        <authorList>
            <person name="Dietrich F.S."/>
            <person name="Voegeli S."/>
            <person name="Kuo S."/>
            <person name="Philippsen P."/>
        </authorList>
    </citation>
    <scope>GENOME REANNOTATION</scope>
    <source>
        <strain>ATCC 10895 / CBS 109.51 / FGSC 9923 / NRRL Y-1056</strain>
    </source>
</reference>
<geneLocation type="mitochondrion"/>
<organism>
    <name type="scientific">Eremothecium gossypii (strain ATCC 10895 / CBS 109.51 / FGSC 9923 / NRRL Y-1056)</name>
    <name type="common">Yeast</name>
    <name type="synonym">Ashbya gossypii</name>
    <dbReference type="NCBI Taxonomy" id="284811"/>
    <lineage>
        <taxon>Eukaryota</taxon>
        <taxon>Fungi</taxon>
        <taxon>Dikarya</taxon>
        <taxon>Ascomycota</taxon>
        <taxon>Saccharomycotina</taxon>
        <taxon>Saccharomycetes</taxon>
        <taxon>Saccharomycetales</taxon>
        <taxon>Saccharomycetaceae</taxon>
        <taxon>Eremothecium</taxon>
    </lineage>
</organism>
<gene>
    <name type="primary">VAR1</name>
    <name type="ordered locus">AMI004W</name>
    <name type="ORF">AgVAR1</name>
</gene>
<sequence>MKYNLLNNMKINNKKLKLKLILMMITMKRLNNMNQHNIYKNRYYNKNNNLQYLNKLNTYNNKMYYFNKQLMNNMLIIDNTFNNLLKKMMMSNNILMTNLKFEHRTNSIHIKYYFYNYMNINNDELSKLYNNYMMSINNQMINLLNNDNNSLNNLMTKYYNKKVYINTYKLNYMYLDTELLSQTLTNIYNNNGLSLKSLKMIINKLPFNNDMLLSKNYVNKMNKYNLTINNNLNNNKKDLINLYTLDNKLLDLSITNNMLLGKYLVGSNIQLKGRTLNRNITRTMKMNIMKGTFNNYMYQWSKLNNLYKLNYMSTNINKTNNTFINKNGMFNIKIKLNTI</sequence>
<feature type="chain" id="PRO_0000220068" description="Small ribosomal subunit protein uS3m">
    <location>
        <begin position="1"/>
        <end position="339"/>
    </location>
</feature>
<name>RMAR_EREGS</name>
<comment type="function">
    <text evidence="1">Essential for mitochondrial protein synthesis and required for the maturation of small ribosomal subunits.</text>
</comment>
<comment type="subcellular location">
    <subcellularLocation>
        <location>Mitochondrion</location>
    </subcellularLocation>
</comment>
<comment type="similarity">
    <text evidence="2">Belongs to the universal ribosomal protein uS3 family.</text>
</comment>
<accession>Q75G41</accession>
<keyword id="KW-0496">Mitochondrion</keyword>
<keyword id="KW-1185">Reference proteome</keyword>
<keyword id="KW-0687">Ribonucleoprotein</keyword>
<keyword id="KW-0689">Ribosomal protein</keyword>
<proteinExistence type="inferred from homology"/>